<organism>
    <name type="scientific">Bdellovibrio bacteriovorus (strain ATCC 15356 / DSM 50701 / NCIMB 9529 / HD100)</name>
    <dbReference type="NCBI Taxonomy" id="264462"/>
    <lineage>
        <taxon>Bacteria</taxon>
        <taxon>Pseudomonadati</taxon>
        <taxon>Bdellovibrionota</taxon>
        <taxon>Bdellovibrionia</taxon>
        <taxon>Bdellovibrionales</taxon>
        <taxon>Pseudobdellovibrionaceae</taxon>
        <taxon>Bdellovibrio</taxon>
    </lineage>
</organism>
<keyword id="KW-1185">Reference proteome</keyword>
<keyword id="KW-0687">Ribonucleoprotein</keyword>
<keyword id="KW-0689">Ribosomal protein</keyword>
<proteinExistence type="inferred from homology"/>
<sequence>MSSHRRRVKHFDRKSGPRKALLRGLVTSLIEHGRITTTVDRAKEVRRHVEKAITLGKKGDLSTTRLLLSRFPNKEAVATIMKDLSPRFKTRPGGYTRIIKIGRRPGDTAEMAFLEFVDYDFEAKTADTAEKSEKSAKTAKAAKAPAKKATAKKASTKAVAAKKKAVKKAQKKDRAASAARA</sequence>
<protein>
    <recommendedName>
        <fullName evidence="1">Large ribosomal subunit protein bL17</fullName>
    </recommendedName>
    <alternativeName>
        <fullName evidence="3">50S ribosomal protein L17</fullName>
    </alternativeName>
</protein>
<dbReference type="EMBL" id="BX842654">
    <property type="protein sequence ID" value="CAE80724.1"/>
    <property type="molecule type" value="Genomic_DNA"/>
</dbReference>
<dbReference type="RefSeq" id="WP_011165327.1">
    <property type="nucleotide sequence ID" value="NC_005363.1"/>
</dbReference>
<dbReference type="SMR" id="Q6MJ37"/>
<dbReference type="STRING" id="264462.Bd2949"/>
<dbReference type="GeneID" id="93014753"/>
<dbReference type="KEGG" id="bba:Bd2949"/>
<dbReference type="eggNOG" id="COG0203">
    <property type="taxonomic scope" value="Bacteria"/>
</dbReference>
<dbReference type="HOGENOM" id="CLU_074407_0_1_7"/>
<dbReference type="Proteomes" id="UP000008080">
    <property type="component" value="Chromosome"/>
</dbReference>
<dbReference type="GO" id="GO:0022625">
    <property type="term" value="C:cytosolic large ribosomal subunit"/>
    <property type="evidence" value="ECO:0007669"/>
    <property type="project" value="TreeGrafter"/>
</dbReference>
<dbReference type="GO" id="GO:0003735">
    <property type="term" value="F:structural constituent of ribosome"/>
    <property type="evidence" value="ECO:0007669"/>
    <property type="project" value="InterPro"/>
</dbReference>
<dbReference type="GO" id="GO:0006412">
    <property type="term" value="P:translation"/>
    <property type="evidence" value="ECO:0007669"/>
    <property type="project" value="UniProtKB-UniRule"/>
</dbReference>
<dbReference type="Gene3D" id="3.90.1030.10">
    <property type="entry name" value="Ribosomal protein L17"/>
    <property type="match status" value="1"/>
</dbReference>
<dbReference type="HAMAP" id="MF_01368">
    <property type="entry name" value="Ribosomal_bL17"/>
    <property type="match status" value="1"/>
</dbReference>
<dbReference type="InterPro" id="IPR000456">
    <property type="entry name" value="Ribosomal_bL17"/>
</dbReference>
<dbReference type="InterPro" id="IPR036373">
    <property type="entry name" value="Ribosomal_bL17_sf"/>
</dbReference>
<dbReference type="NCBIfam" id="TIGR00059">
    <property type="entry name" value="L17"/>
    <property type="match status" value="1"/>
</dbReference>
<dbReference type="PANTHER" id="PTHR14413:SF16">
    <property type="entry name" value="LARGE RIBOSOMAL SUBUNIT PROTEIN BL17M"/>
    <property type="match status" value="1"/>
</dbReference>
<dbReference type="PANTHER" id="PTHR14413">
    <property type="entry name" value="RIBOSOMAL PROTEIN L17"/>
    <property type="match status" value="1"/>
</dbReference>
<dbReference type="Pfam" id="PF01196">
    <property type="entry name" value="Ribosomal_L17"/>
    <property type="match status" value="1"/>
</dbReference>
<dbReference type="SUPFAM" id="SSF64263">
    <property type="entry name" value="Prokaryotic ribosomal protein L17"/>
    <property type="match status" value="1"/>
</dbReference>
<name>RL17_BDEBA</name>
<evidence type="ECO:0000255" key="1">
    <source>
        <dbReference type="HAMAP-Rule" id="MF_01368"/>
    </source>
</evidence>
<evidence type="ECO:0000256" key="2">
    <source>
        <dbReference type="SAM" id="MobiDB-lite"/>
    </source>
</evidence>
<evidence type="ECO:0000305" key="3"/>
<feature type="chain" id="PRO_0000267833" description="Large ribosomal subunit protein bL17">
    <location>
        <begin position="1"/>
        <end position="181"/>
    </location>
</feature>
<feature type="region of interest" description="Disordered" evidence="2">
    <location>
        <begin position="129"/>
        <end position="181"/>
    </location>
</feature>
<feature type="compositionally biased region" description="Basic residues" evidence="2">
    <location>
        <begin position="145"/>
        <end position="171"/>
    </location>
</feature>
<comment type="subunit">
    <text evidence="1">Part of the 50S ribosomal subunit. Contacts protein L32.</text>
</comment>
<comment type="similarity">
    <text evidence="1">Belongs to the bacterial ribosomal protein bL17 family.</text>
</comment>
<reference key="1">
    <citation type="journal article" date="2004" name="Science">
        <title>A predator unmasked: life cycle of Bdellovibrio bacteriovorus from a genomic perspective.</title>
        <authorList>
            <person name="Rendulic S."/>
            <person name="Jagtap P."/>
            <person name="Rosinus A."/>
            <person name="Eppinger M."/>
            <person name="Baar C."/>
            <person name="Lanz C."/>
            <person name="Keller H."/>
            <person name="Lambert C."/>
            <person name="Evans K.J."/>
            <person name="Goesmann A."/>
            <person name="Meyer F."/>
            <person name="Sockett R.E."/>
            <person name="Schuster S.C."/>
        </authorList>
    </citation>
    <scope>NUCLEOTIDE SEQUENCE [LARGE SCALE GENOMIC DNA]</scope>
    <source>
        <strain>ATCC 15356 / DSM 50701 / NCIMB 9529 / HD100</strain>
    </source>
</reference>
<gene>
    <name evidence="1" type="primary">rplQ</name>
    <name type="ordered locus">Bd2949</name>
</gene>
<accession>Q6MJ37</accession>